<sequence>MSPRKYVIVTGGVLSSVGKGLTTASLALLLSSRGYSVEAIKIDPYINVDAGTMNPYMHGEVFVTEDGGETDLDIGHYERFLGKNLSRKHNITTGQIYFSVISKERSGDYLGQTVQVIPHITDEIKSRIKEVGDVSGADVVIVEIGGTVGDIEGLPFLEAARQMRLEEGFDNTFFIHVALSPYLPTTGEQKTKPVQHSIQELRRIGIQPDAVVVRSHQPLEQEGLRKIALYATLPMENVINSYDIENIYRLPLLLEKQGLARLVERRLFGRETRPDLSRWEEFVALYEKASRRVKVAMVGKYTKLRDSYISIVEALKHASAYEGVRPELLWVESTDIERGVVDVDRVFEEADGAIVLPGFGVRGVEGKIEAIRRFREGKKPMLGICFGMQLSVVEYARNVLGLKEAHTTEVNPETPHPVVDLLPEQRGIDKLGGTMRLGARPVRIVEGTILWSLYGRELASERHRHRYEVNPTYVDRLVEAGLVVSAWSQEGYVEAVELRPRDHPFFLATQFHPEFKSRPLNPAPVFKGFVTAVARLRG</sequence>
<proteinExistence type="inferred from homology"/>
<gene>
    <name evidence="1" type="primary">pyrG</name>
    <name type="ordered locus">APE_1604</name>
</gene>
<organism>
    <name type="scientific">Aeropyrum pernix (strain ATCC 700893 / DSM 11879 / JCM 9820 / NBRC 100138 / K1)</name>
    <dbReference type="NCBI Taxonomy" id="272557"/>
    <lineage>
        <taxon>Archaea</taxon>
        <taxon>Thermoproteota</taxon>
        <taxon>Thermoprotei</taxon>
        <taxon>Desulfurococcales</taxon>
        <taxon>Desulfurococcaceae</taxon>
        <taxon>Aeropyrum</taxon>
    </lineage>
</organism>
<comment type="function">
    <text evidence="1">Catalyzes the ATP-dependent amination of UTP to CTP with either L-glutamine or ammonia as the source of nitrogen. Regulates intracellular CTP levels through interactions with the four ribonucleotide triphosphates.</text>
</comment>
<comment type="catalytic activity">
    <reaction evidence="1">
        <text>UTP + L-glutamine + ATP + H2O = CTP + L-glutamate + ADP + phosphate + 2 H(+)</text>
        <dbReference type="Rhea" id="RHEA:26426"/>
        <dbReference type="ChEBI" id="CHEBI:15377"/>
        <dbReference type="ChEBI" id="CHEBI:15378"/>
        <dbReference type="ChEBI" id="CHEBI:29985"/>
        <dbReference type="ChEBI" id="CHEBI:30616"/>
        <dbReference type="ChEBI" id="CHEBI:37563"/>
        <dbReference type="ChEBI" id="CHEBI:43474"/>
        <dbReference type="ChEBI" id="CHEBI:46398"/>
        <dbReference type="ChEBI" id="CHEBI:58359"/>
        <dbReference type="ChEBI" id="CHEBI:456216"/>
        <dbReference type="EC" id="6.3.4.2"/>
    </reaction>
</comment>
<comment type="catalytic activity">
    <reaction evidence="1">
        <text>L-glutamine + H2O = L-glutamate + NH4(+)</text>
        <dbReference type="Rhea" id="RHEA:15889"/>
        <dbReference type="ChEBI" id="CHEBI:15377"/>
        <dbReference type="ChEBI" id="CHEBI:28938"/>
        <dbReference type="ChEBI" id="CHEBI:29985"/>
        <dbReference type="ChEBI" id="CHEBI:58359"/>
    </reaction>
</comment>
<comment type="catalytic activity">
    <reaction evidence="1">
        <text>UTP + NH4(+) + ATP = CTP + ADP + phosphate + 2 H(+)</text>
        <dbReference type="Rhea" id="RHEA:16597"/>
        <dbReference type="ChEBI" id="CHEBI:15378"/>
        <dbReference type="ChEBI" id="CHEBI:28938"/>
        <dbReference type="ChEBI" id="CHEBI:30616"/>
        <dbReference type="ChEBI" id="CHEBI:37563"/>
        <dbReference type="ChEBI" id="CHEBI:43474"/>
        <dbReference type="ChEBI" id="CHEBI:46398"/>
        <dbReference type="ChEBI" id="CHEBI:456216"/>
    </reaction>
</comment>
<comment type="activity regulation">
    <text evidence="1">Allosterically activated by GTP, when glutamine is the substrate; GTP has no effect on the reaction when ammonia is the substrate. The allosteric effector GTP functions by stabilizing the protein conformation that binds the tetrahedral intermediate(s) formed during glutamine hydrolysis. Inhibited by the product CTP, via allosteric rather than competitive inhibition.</text>
</comment>
<comment type="pathway">
    <text evidence="1">Pyrimidine metabolism; CTP biosynthesis via de novo pathway; CTP from UDP: step 2/2.</text>
</comment>
<comment type="subunit">
    <text evidence="1">Homotetramer.</text>
</comment>
<comment type="miscellaneous">
    <text evidence="1">CTPSs have evolved a hybrid strategy for distinguishing between UTP and CTP. The overlapping regions of the product feedback inhibitory and substrate sites recognize a common feature in both compounds, the triphosphate moiety. To differentiate isosteric substrate and product pyrimidine rings, an additional pocket far from the expected kinase/ligase catalytic site, specifically recognizes the cytosine and ribose portions of the product inhibitor.</text>
</comment>
<comment type="similarity">
    <text evidence="1">Belongs to the CTP synthase family.</text>
</comment>
<reference key="1">
    <citation type="journal article" date="1999" name="DNA Res.">
        <title>Complete genome sequence of an aerobic hyper-thermophilic crenarchaeon, Aeropyrum pernix K1.</title>
        <authorList>
            <person name="Kawarabayasi Y."/>
            <person name="Hino Y."/>
            <person name="Horikawa H."/>
            <person name="Yamazaki S."/>
            <person name="Haikawa Y."/>
            <person name="Jin-no K."/>
            <person name="Takahashi M."/>
            <person name="Sekine M."/>
            <person name="Baba S."/>
            <person name="Ankai A."/>
            <person name="Kosugi H."/>
            <person name="Hosoyama A."/>
            <person name="Fukui S."/>
            <person name="Nagai Y."/>
            <person name="Nishijima K."/>
            <person name="Nakazawa H."/>
            <person name="Takamiya M."/>
            <person name="Masuda S."/>
            <person name="Funahashi T."/>
            <person name="Tanaka T."/>
            <person name="Kudoh Y."/>
            <person name="Yamazaki J."/>
            <person name="Kushida N."/>
            <person name="Oguchi A."/>
            <person name="Aoki K."/>
            <person name="Kubota K."/>
            <person name="Nakamura Y."/>
            <person name="Nomura N."/>
            <person name="Sako Y."/>
            <person name="Kikuchi H."/>
        </authorList>
    </citation>
    <scope>NUCLEOTIDE SEQUENCE [LARGE SCALE GENOMIC DNA]</scope>
    <source>
        <strain>ATCC 700893 / DSM 11879 / JCM 9820 / NBRC 100138 / K1</strain>
    </source>
</reference>
<dbReference type="EC" id="6.3.4.2" evidence="1"/>
<dbReference type="EMBL" id="BA000002">
    <property type="protein sequence ID" value="BAA80604.1"/>
    <property type="molecule type" value="Genomic_DNA"/>
</dbReference>
<dbReference type="PIR" id="G72539">
    <property type="entry name" value="G72539"/>
</dbReference>
<dbReference type="RefSeq" id="WP_010866481.1">
    <property type="nucleotide sequence ID" value="NC_000854.2"/>
</dbReference>
<dbReference type="SMR" id="Q9YBJ4"/>
<dbReference type="STRING" id="272557.APE_1604"/>
<dbReference type="MEROPS" id="C26.964"/>
<dbReference type="EnsemblBacteria" id="BAA80604">
    <property type="protein sequence ID" value="BAA80604"/>
    <property type="gene ID" value="APE_1604"/>
</dbReference>
<dbReference type="GeneID" id="1446124"/>
<dbReference type="KEGG" id="ape:APE_1604"/>
<dbReference type="PATRIC" id="fig|272557.25.peg.1084"/>
<dbReference type="eggNOG" id="arCOG00063">
    <property type="taxonomic scope" value="Archaea"/>
</dbReference>
<dbReference type="UniPathway" id="UPA00159">
    <property type="reaction ID" value="UER00277"/>
</dbReference>
<dbReference type="Proteomes" id="UP000002518">
    <property type="component" value="Chromosome"/>
</dbReference>
<dbReference type="GO" id="GO:0005524">
    <property type="term" value="F:ATP binding"/>
    <property type="evidence" value="ECO:0007669"/>
    <property type="project" value="UniProtKB-KW"/>
</dbReference>
<dbReference type="GO" id="GO:0003883">
    <property type="term" value="F:CTP synthase activity"/>
    <property type="evidence" value="ECO:0007669"/>
    <property type="project" value="UniProtKB-UniRule"/>
</dbReference>
<dbReference type="GO" id="GO:0004359">
    <property type="term" value="F:glutaminase activity"/>
    <property type="evidence" value="ECO:0007669"/>
    <property type="project" value="RHEA"/>
</dbReference>
<dbReference type="GO" id="GO:0042802">
    <property type="term" value="F:identical protein binding"/>
    <property type="evidence" value="ECO:0007669"/>
    <property type="project" value="TreeGrafter"/>
</dbReference>
<dbReference type="GO" id="GO:0046872">
    <property type="term" value="F:metal ion binding"/>
    <property type="evidence" value="ECO:0007669"/>
    <property type="project" value="UniProtKB-KW"/>
</dbReference>
<dbReference type="GO" id="GO:0044210">
    <property type="term" value="P:'de novo' CTP biosynthetic process"/>
    <property type="evidence" value="ECO:0007669"/>
    <property type="project" value="UniProtKB-UniRule"/>
</dbReference>
<dbReference type="GO" id="GO:0019856">
    <property type="term" value="P:pyrimidine nucleobase biosynthetic process"/>
    <property type="evidence" value="ECO:0007669"/>
    <property type="project" value="TreeGrafter"/>
</dbReference>
<dbReference type="CDD" id="cd03113">
    <property type="entry name" value="CTPS_N"/>
    <property type="match status" value="1"/>
</dbReference>
<dbReference type="CDD" id="cd01746">
    <property type="entry name" value="GATase1_CTP_Synthase"/>
    <property type="match status" value="1"/>
</dbReference>
<dbReference type="FunFam" id="3.40.50.300:FF:000009">
    <property type="entry name" value="CTP synthase"/>
    <property type="match status" value="1"/>
</dbReference>
<dbReference type="FunFam" id="3.40.50.880:FF:000002">
    <property type="entry name" value="CTP synthase"/>
    <property type="match status" value="1"/>
</dbReference>
<dbReference type="Gene3D" id="3.40.50.880">
    <property type="match status" value="1"/>
</dbReference>
<dbReference type="Gene3D" id="3.40.50.300">
    <property type="entry name" value="P-loop containing nucleotide triphosphate hydrolases"/>
    <property type="match status" value="1"/>
</dbReference>
<dbReference type="HAMAP" id="MF_01227">
    <property type="entry name" value="PyrG"/>
    <property type="match status" value="1"/>
</dbReference>
<dbReference type="InterPro" id="IPR029062">
    <property type="entry name" value="Class_I_gatase-like"/>
</dbReference>
<dbReference type="InterPro" id="IPR004468">
    <property type="entry name" value="CTP_synthase"/>
</dbReference>
<dbReference type="InterPro" id="IPR017456">
    <property type="entry name" value="CTP_synthase_N"/>
</dbReference>
<dbReference type="InterPro" id="IPR017926">
    <property type="entry name" value="GATASE"/>
</dbReference>
<dbReference type="InterPro" id="IPR033828">
    <property type="entry name" value="GATase1_CTP_Synthase"/>
</dbReference>
<dbReference type="InterPro" id="IPR027417">
    <property type="entry name" value="P-loop_NTPase"/>
</dbReference>
<dbReference type="NCBIfam" id="NF003792">
    <property type="entry name" value="PRK05380.1"/>
    <property type="match status" value="1"/>
</dbReference>
<dbReference type="NCBIfam" id="TIGR00337">
    <property type="entry name" value="PyrG"/>
    <property type="match status" value="1"/>
</dbReference>
<dbReference type="PANTHER" id="PTHR11550">
    <property type="entry name" value="CTP SYNTHASE"/>
    <property type="match status" value="1"/>
</dbReference>
<dbReference type="PANTHER" id="PTHR11550:SF0">
    <property type="entry name" value="CTP SYNTHASE-RELATED"/>
    <property type="match status" value="1"/>
</dbReference>
<dbReference type="Pfam" id="PF06418">
    <property type="entry name" value="CTP_synth_N"/>
    <property type="match status" value="1"/>
</dbReference>
<dbReference type="Pfam" id="PF00117">
    <property type="entry name" value="GATase"/>
    <property type="match status" value="1"/>
</dbReference>
<dbReference type="SUPFAM" id="SSF52317">
    <property type="entry name" value="Class I glutamine amidotransferase-like"/>
    <property type="match status" value="1"/>
</dbReference>
<dbReference type="SUPFAM" id="SSF52540">
    <property type="entry name" value="P-loop containing nucleoside triphosphate hydrolases"/>
    <property type="match status" value="1"/>
</dbReference>
<dbReference type="PROSITE" id="PS51273">
    <property type="entry name" value="GATASE_TYPE_1"/>
    <property type="match status" value="1"/>
</dbReference>
<accession>Q9YBJ4</accession>
<keyword id="KW-0067">ATP-binding</keyword>
<keyword id="KW-0315">Glutamine amidotransferase</keyword>
<keyword id="KW-0436">Ligase</keyword>
<keyword id="KW-0460">Magnesium</keyword>
<keyword id="KW-0479">Metal-binding</keyword>
<keyword id="KW-0547">Nucleotide-binding</keyword>
<keyword id="KW-0665">Pyrimidine biosynthesis</keyword>
<keyword id="KW-1185">Reference proteome</keyword>
<protein>
    <recommendedName>
        <fullName evidence="1">CTP synthase</fullName>
        <ecNumber evidence="1">6.3.4.2</ecNumber>
    </recommendedName>
    <alternativeName>
        <fullName evidence="1">Cytidine 5'-triphosphate synthase</fullName>
    </alternativeName>
    <alternativeName>
        <fullName evidence="1">Cytidine triphosphate synthetase</fullName>
        <shortName evidence="1">CTP synthetase</shortName>
        <shortName evidence="1">CTPS</shortName>
    </alternativeName>
    <alternativeName>
        <fullName evidence="1">UTP--ammonia ligase</fullName>
    </alternativeName>
</protein>
<evidence type="ECO:0000255" key="1">
    <source>
        <dbReference type="HAMAP-Rule" id="MF_01227"/>
    </source>
</evidence>
<name>PYRG_AERPE</name>
<feature type="chain" id="PRO_0000138256" description="CTP synthase">
    <location>
        <begin position="1"/>
        <end position="538"/>
    </location>
</feature>
<feature type="domain" description="Glutamine amidotransferase type-1" evidence="1">
    <location>
        <begin position="294"/>
        <end position="538"/>
    </location>
</feature>
<feature type="region of interest" description="Amidoligase domain" evidence="1">
    <location>
        <begin position="1"/>
        <end position="269"/>
    </location>
</feature>
<feature type="active site" description="Nucleophile; for glutamine hydrolysis" evidence="1">
    <location>
        <position position="385"/>
    </location>
</feature>
<feature type="active site" evidence="1">
    <location>
        <position position="512"/>
    </location>
</feature>
<feature type="active site" evidence="1">
    <location>
        <position position="514"/>
    </location>
</feature>
<feature type="binding site" evidence="1">
    <location>
        <position position="15"/>
    </location>
    <ligand>
        <name>CTP</name>
        <dbReference type="ChEBI" id="CHEBI:37563"/>
        <note>allosteric inhibitor</note>
    </ligand>
</feature>
<feature type="binding site" evidence="1">
    <location>
        <position position="15"/>
    </location>
    <ligand>
        <name>UTP</name>
        <dbReference type="ChEBI" id="CHEBI:46398"/>
    </ligand>
</feature>
<feature type="binding site" evidence="1">
    <location>
        <begin position="16"/>
        <end position="21"/>
    </location>
    <ligand>
        <name>ATP</name>
        <dbReference type="ChEBI" id="CHEBI:30616"/>
    </ligand>
</feature>
<feature type="binding site" evidence="1">
    <location>
        <position position="56"/>
    </location>
    <ligand>
        <name>L-glutamine</name>
        <dbReference type="ChEBI" id="CHEBI:58359"/>
    </ligand>
</feature>
<feature type="binding site" evidence="1">
    <location>
        <position position="73"/>
    </location>
    <ligand>
        <name>ATP</name>
        <dbReference type="ChEBI" id="CHEBI:30616"/>
    </ligand>
</feature>
<feature type="binding site" evidence="1">
    <location>
        <position position="73"/>
    </location>
    <ligand>
        <name>Mg(2+)</name>
        <dbReference type="ChEBI" id="CHEBI:18420"/>
    </ligand>
</feature>
<feature type="binding site" evidence="1">
    <location>
        <position position="143"/>
    </location>
    <ligand>
        <name>Mg(2+)</name>
        <dbReference type="ChEBI" id="CHEBI:18420"/>
    </ligand>
</feature>
<feature type="binding site" evidence="1">
    <location>
        <begin position="150"/>
        <end position="152"/>
    </location>
    <ligand>
        <name>CTP</name>
        <dbReference type="ChEBI" id="CHEBI:37563"/>
        <note>allosteric inhibitor</note>
    </ligand>
</feature>
<feature type="binding site" evidence="1">
    <location>
        <begin position="190"/>
        <end position="195"/>
    </location>
    <ligand>
        <name>CTP</name>
        <dbReference type="ChEBI" id="CHEBI:37563"/>
        <note>allosteric inhibitor</note>
    </ligand>
</feature>
<feature type="binding site" evidence="1">
    <location>
        <begin position="190"/>
        <end position="195"/>
    </location>
    <ligand>
        <name>UTP</name>
        <dbReference type="ChEBI" id="CHEBI:46398"/>
    </ligand>
</feature>
<feature type="binding site" evidence="1">
    <location>
        <position position="226"/>
    </location>
    <ligand>
        <name>CTP</name>
        <dbReference type="ChEBI" id="CHEBI:37563"/>
        <note>allosteric inhibitor</note>
    </ligand>
</feature>
<feature type="binding site" evidence="1">
    <location>
        <position position="226"/>
    </location>
    <ligand>
        <name>UTP</name>
        <dbReference type="ChEBI" id="CHEBI:46398"/>
    </ligand>
</feature>
<feature type="binding site" evidence="1">
    <location>
        <position position="358"/>
    </location>
    <ligand>
        <name>L-glutamine</name>
        <dbReference type="ChEBI" id="CHEBI:58359"/>
    </ligand>
</feature>
<feature type="binding site" evidence="1">
    <location>
        <begin position="386"/>
        <end position="389"/>
    </location>
    <ligand>
        <name>L-glutamine</name>
        <dbReference type="ChEBI" id="CHEBI:58359"/>
    </ligand>
</feature>
<feature type="binding site" evidence="1">
    <location>
        <position position="409"/>
    </location>
    <ligand>
        <name>L-glutamine</name>
        <dbReference type="ChEBI" id="CHEBI:58359"/>
    </ligand>
</feature>
<feature type="binding site" evidence="1">
    <location>
        <position position="466"/>
    </location>
    <ligand>
        <name>L-glutamine</name>
        <dbReference type="ChEBI" id="CHEBI:58359"/>
    </ligand>
</feature>